<comment type="function">
    <text evidence="1">Acts as a chaperone.</text>
</comment>
<comment type="induction">
    <text evidence="1">By stress conditions e.g. heat shock.</text>
</comment>
<comment type="similarity">
    <text evidence="1">Belongs to the heat shock protein 70 family.</text>
</comment>
<dbReference type="EMBL" id="AM236080">
    <property type="protein sequence ID" value="CAK05641.1"/>
    <property type="molecule type" value="Genomic_DNA"/>
</dbReference>
<dbReference type="RefSeq" id="WP_011649970.1">
    <property type="nucleotide sequence ID" value="NC_008380.1"/>
</dbReference>
<dbReference type="SMR" id="Q1MN11"/>
<dbReference type="EnsemblBacteria" id="CAK05641">
    <property type="protein sequence ID" value="CAK05641"/>
    <property type="gene ID" value="RL0152"/>
</dbReference>
<dbReference type="KEGG" id="rle:RL0152"/>
<dbReference type="eggNOG" id="COG0443">
    <property type="taxonomic scope" value="Bacteria"/>
</dbReference>
<dbReference type="HOGENOM" id="CLU_005965_2_1_5"/>
<dbReference type="Proteomes" id="UP000006575">
    <property type="component" value="Chromosome"/>
</dbReference>
<dbReference type="GO" id="GO:0005524">
    <property type="term" value="F:ATP binding"/>
    <property type="evidence" value="ECO:0007669"/>
    <property type="project" value="UniProtKB-UniRule"/>
</dbReference>
<dbReference type="GO" id="GO:0140662">
    <property type="term" value="F:ATP-dependent protein folding chaperone"/>
    <property type="evidence" value="ECO:0007669"/>
    <property type="project" value="InterPro"/>
</dbReference>
<dbReference type="GO" id="GO:0051082">
    <property type="term" value="F:unfolded protein binding"/>
    <property type="evidence" value="ECO:0007669"/>
    <property type="project" value="InterPro"/>
</dbReference>
<dbReference type="CDD" id="cd11733">
    <property type="entry name" value="ASKHA_NBD_HSP70_HSPA9"/>
    <property type="match status" value="1"/>
</dbReference>
<dbReference type="FunFam" id="2.60.34.10:FF:000014">
    <property type="entry name" value="Chaperone protein DnaK HSP70"/>
    <property type="match status" value="1"/>
</dbReference>
<dbReference type="FunFam" id="3.30.420.40:FF:000020">
    <property type="entry name" value="Chaperone protein HscA homolog"/>
    <property type="match status" value="1"/>
</dbReference>
<dbReference type="FunFam" id="1.20.1270.10:FF:000001">
    <property type="entry name" value="Molecular chaperone DnaK"/>
    <property type="match status" value="1"/>
</dbReference>
<dbReference type="FunFam" id="3.30.420.40:FF:000004">
    <property type="entry name" value="Molecular chaperone DnaK"/>
    <property type="match status" value="1"/>
</dbReference>
<dbReference type="FunFam" id="3.90.640.10:FF:000003">
    <property type="entry name" value="Molecular chaperone DnaK"/>
    <property type="match status" value="1"/>
</dbReference>
<dbReference type="Gene3D" id="1.20.1270.10">
    <property type="match status" value="1"/>
</dbReference>
<dbReference type="Gene3D" id="3.30.420.40">
    <property type="match status" value="2"/>
</dbReference>
<dbReference type="Gene3D" id="3.90.640.10">
    <property type="entry name" value="Actin, Chain A, domain 4"/>
    <property type="match status" value="1"/>
</dbReference>
<dbReference type="Gene3D" id="2.60.34.10">
    <property type="entry name" value="Substrate Binding Domain Of DNAk, Chain A, domain 1"/>
    <property type="match status" value="1"/>
</dbReference>
<dbReference type="HAMAP" id="MF_00332">
    <property type="entry name" value="DnaK"/>
    <property type="match status" value="1"/>
</dbReference>
<dbReference type="InterPro" id="IPR043129">
    <property type="entry name" value="ATPase_NBD"/>
</dbReference>
<dbReference type="InterPro" id="IPR012725">
    <property type="entry name" value="Chaperone_DnaK"/>
</dbReference>
<dbReference type="InterPro" id="IPR018181">
    <property type="entry name" value="Heat_shock_70_CS"/>
</dbReference>
<dbReference type="InterPro" id="IPR029048">
    <property type="entry name" value="HSP70_C_sf"/>
</dbReference>
<dbReference type="InterPro" id="IPR029047">
    <property type="entry name" value="HSP70_peptide-bd_sf"/>
</dbReference>
<dbReference type="InterPro" id="IPR013126">
    <property type="entry name" value="Hsp_70_fam"/>
</dbReference>
<dbReference type="NCBIfam" id="NF001413">
    <property type="entry name" value="PRK00290.1"/>
    <property type="match status" value="1"/>
</dbReference>
<dbReference type="NCBIfam" id="NF003520">
    <property type="entry name" value="PRK05183.1"/>
    <property type="match status" value="1"/>
</dbReference>
<dbReference type="NCBIfam" id="TIGR02350">
    <property type="entry name" value="prok_dnaK"/>
    <property type="match status" value="1"/>
</dbReference>
<dbReference type="PANTHER" id="PTHR19375">
    <property type="entry name" value="HEAT SHOCK PROTEIN 70KDA"/>
    <property type="match status" value="1"/>
</dbReference>
<dbReference type="Pfam" id="PF00012">
    <property type="entry name" value="HSP70"/>
    <property type="match status" value="1"/>
</dbReference>
<dbReference type="PRINTS" id="PR00301">
    <property type="entry name" value="HEATSHOCK70"/>
</dbReference>
<dbReference type="SUPFAM" id="SSF53067">
    <property type="entry name" value="Actin-like ATPase domain"/>
    <property type="match status" value="2"/>
</dbReference>
<dbReference type="SUPFAM" id="SSF100934">
    <property type="entry name" value="Heat shock protein 70kD (HSP70), C-terminal subdomain"/>
    <property type="match status" value="1"/>
</dbReference>
<dbReference type="SUPFAM" id="SSF100920">
    <property type="entry name" value="Heat shock protein 70kD (HSP70), peptide-binding domain"/>
    <property type="match status" value="1"/>
</dbReference>
<dbReference type="PROSITE" id="PS00297">
    <property type="entry name" value="HSP70_1"/>
    <property type="match status" value="1"/>
</dbReference>
<dbReference type="PROSITE" id="PS00329">
    <property type="entry name" value="HSP70_2"/>
    <property type="match status" value="1"/>
</dbReference>
<dbReference type="PROSITE" id="PS01036">
    <property type="entry name" value="HSP70_3"/>
    <property type="match status" value="1"/>
</dbReference>
<reference key="1">
    <citation type="journal article" date="2006" name="Genome Biol.">
        <title>The genome of Rhizobium leguminosarum has recognizable core and accessory components.</title>
        <authorList>
            <person name="Young J.P.W."/>
            <person name="Crossman L.C."/>
            <person name="Johnston A.W.B."/>
            <person name="Thomson N.R."/>
            <person name="Ghazoui Z.F."/>
            <person name="Hull K.H."/>
            <person name="Wexler M."/>
            <person name="Curson A.R.J."/>
            <person name="Todd J.D."/>
            <person name="Poole P.S."/>
            <person name="Mauchline T.H."/>
            <person name="East A.K."/>
            <person name="Quail M.A."/>
            <person name="Churcher C."/>
            <person name="Arrowsmith C."/>
            <person name="Cherevach I."/>
            <person name="Chillingworth T."/>
            <person name="Clarke K."/>
            <person name="Cronin A."/>
            <person name="Davis P."/>
            <person name="Fraser A."/>
            <person name="Hance Z."/>
            <person name="Hauser H."/>
            <person name="Jagels K."/>
            <person name="Moule S."/>
            <person name="Mungall K."/>
            <person name="Norbertczak H."/>
            <person name="Rabbinowitsch E."/>
            <person name="Sanders M."/>
            <person name="Simmonds M."/>
            <person name="Whitehead S."/>
            <person name="Parkhill J."/>
        </authorList>
    </citation>
    <scope>NUCLEOTIDE SEQUENCE [LARGE SCALE GENOMIC DNA]</scope>
    <source>
        <strain>DSM 114642 / LMG 32736 / 3841</strain>
    </source>
</reference>
<feature type="chain" id="PRO_1000059641" description="Chaperone protein DnaK">
    <location>
        <begin position="1"/>
        <end position="638"/>
    </location>
</feature>
<feature type="region of interest" description="Disordered" evidence="2">
    <location>
        <begin position="514"/>
        <end position="542"/>
    </location>
</feature>
<feature type="region of interest" description="Disordered" evidence="2">
    <location>
        <begin position="605"/>
        <end position="638"/>
    </location>
</feature>
<feature type="compositionally biased region" description="Basic and acidic residues" evidence="2">
    <location>
        <begin position="514"/>
        <end position="529"/>
    </location>
</feature>
<feature type="compositionally biased region" description="Low complexity" evidence="2">
    <location>
        <begin position="605"/>
        <end position="619"/>
    </location>
</feature>
<feature type="modified residue" description="Phosphothreonine; by autocatalysis" evidence="1">
    <location>
        <position position="198"/>
    </location>
</feature>
<proteinExistence type="inferred from homology"/>
<keyword id="KW-0067">ATP-binding</keyword>
<keyword id="KW-0143">Chaperone</keyword>
<keyword id="KW-0547">Nucleotide-binding</keyword>
<keyword id="KW-0597">Phosphoprotein</keyword>
<keyword id="KW-0346">Stress response</keyword>
<gene>
    <name evidence="1" type="primary">dnaK</name>
    <name type="ordered locus">RL0152</name>
</gene>
<accession>Q1MN11</accession>
<evidence type="ECO:0000255" key="1">
    <source>
        <dbReference type="HAMAP-Rule" id="MF_00332"/>
    </source>
</evidence>
<evidence type="ECO:0000256" key="2">
    <source>
        <dbReference type="SAM" id="MobiDB-lite"/>
    </source>
</evidence>
<name>DNAK_RHIJ3</name>
<sequence length="638" mass="68448">MAKVIGIDLGTTNSCVAVMDGKDAKVIENAEGARTTPSMVAFSDDGERLVGQPAKRQAVTNPTNTLFAVKRLIGRRYEDPTVEKDKHLVPFTIVKGDNGDAWVEANGKGYSPAQISAMILQKMKETAESYLGEKVEKAVITVPAYFNDAQRQATKDAGRIAGLEVLRIINEPTAAALAYGLDKKEGKTIAVYDLGGGTFDISILEIGDGVFEVKSTNGDTFLGGEDFDMRLVEYLVGEFKRDNGIDLKNDKLALQRLKEAAEKAKIELSSSQQTEINLPFITADASGPKHLTLKLTRAKLESLVDDLVQRTIAPCKAALKDAGVTAAEIDEVVLVGGMSRMPKVQEVVKQLFGKEPHKGVNPDEVVALGAAIQAGVLQGDVKDVLLLDVTPLSLGIETLGGVFTRLIERNTTIPTKKSQTFSTAEDNQQAVTIRVSQGEREMAADNKLLGQFDLVGLPPSPRGMPQIEVTFDIDANGIVQVSAKDKGTGKEQQIRIQASGGLSDADIEKMVKDAEAHATEDKKRREAVEARNQAESLIHSSEKSLKDYGDKVSEADRTAISDAIAALKTASEASEPDADDIKAKTQTLMEVSMKLGQAIYEAQQAEGGAAGDASAESGDNVVDADYEEIKDDDRKKSA</sequence>
<protein>
    <recommendedName>
        <fullName evidence="1">Chaperone protein DnaK</fullName>
    </recommendedName>
    <alternativeName>
        <fullName evidence="1">HSP70</fullName>
    </alternativeName>
    <alternativeName>
        <fullName evidence="1">Heat shock 70 kDa protein</fullName>
    </alternativeName>
    <alternativeName>
        <fullName evidence="1">Heat shock protein 70</fullName>
    </alternativeName>
</protein>
<organism>
    <name type="scientific">Rhizobium johnstonii (strain DSM 114642 / LMG 32736 / 3841)</name>
    <name type="common">Rhizobium leguminosarum bv. viciae</name>
    <dbReference type="NCBI Taxonomy" id="216596"/>
    <lineage>
        <taxon>Bacteria</taxon>
        <taxon>Pseudomonadati</taxon>
        <taxon>Pseudomonadota</taxon>
        <taxon>Alphaproteobacteria</taxon>
        <taxon>Hyphomicrobiales</taxon>
        <taxon>Rhizobiaceae</taxon>
        <taxon>Rhizobium/Agrobacterium group</taxon>
        <taxon>Rhizobium</taxon>
        <taxon>Rhizobium johnstonii</taxon>
    </lineage>
</organism>